<dbReference type="EMBL" id="CP000783">
    <property type="protein sequence ID" value="ABU75334.1"/>
    <property type="molecule type" value="Genomic_DNA"/>
</dbReference>
<dbReference type="RefSeq" id="WP_001140434.1">
    <property type="nucleotide sequence ID" value="NC_009778.1"/>
</dbReference>
<dbReference type="SMR" id="A7MPG8"/>
<dbReference type="GeneID" id="97393185"/>
<dbReference type="KEGG" id="esa:ESA_00025"/>
<dbReference type="HOGENOM" id="CLU_131047_1_4_6"/>
<dbReference type="Proteomes" id="UP000000260">
    <property type="component" value="Chromosome"/>
</dbReference>
<dbReference type="GO" id="GO:0022625">
    <property type="term" value="C:cytosolic large ribosomal subunit"/>
    <property type="evidence" value="ECO:0007669"/>
    <property type="project" value="TreeGrafter"/>
</dbReference>
<dbReference type="GO" id="GO:0003735">
    <property type="term" value="F:structural constituent of ribosome"/>
    <property type="evidence" value="ECO:0007669"/>
    <property type="project" value="InterPro"/>
</dbReference>
<dbReference type="GO" id="GO:0006412">
    <property type="term" value="P:translation"/>
    <property type="evidence" value="ECO:0007669"/>
    <property type="project" value="UniProtKB-UniRule"/>
</dbReference>
<dbReference type="CDD" id="cd01658">
    <property type="entry name" value="Ribosomal_L30"/>
    <property type="match status" value="1"/>
</dbReference>
<dbReference type="FunFam" id="3.30.1390.20:FF:000001">
    <property type="entry name" value="50S ribosomal protein L30"/>
    <property type="match status" value="1"/>
</dbReference>
<dbReference type="Gene3D" id="3.30.1390.20">
    <property type="entry name" value="Ribosomal protein L30, ferredoxin-like fold domain"/>
    <property type="match status" value="1"/>
</dbReference>
<dbReference type="HAMAP" id="MF_01371_B">
    <property type="entry name" value="Ribosomal_uL30_B"/>
    <property type="match status" value="1"/>
</dbReference>
<dbReference type="InterPro" id="IPR036919">
    <property type="entry name" value="Ribo_uL30_ferredoxin-like_sf"/>
</dbReference>
<dbReference type="InterPro" id="IPR005996">
    <property type="entry name" value="Ribosomal_uL30_bac-type"/>
</dbReference>
<dbReference type="InterPro" id="IPR018038">
    <property type="entry name" value="Ribosomal_uL30_CS"/>
</dbReference>
<dbReference type="InterPro" id="IPR016082">
    <property type="entry name" value="Ribosomal_uL30_ferredoxin-like"/>
</dbReference>
<dbReference type="NCBIfam" id="TIGR01308">
    <property type="entry name" value="rpmD_bact"/>
    <property type="match status" value="1"/>
</dbReference>
<dbReference type="PANTHER" id="PTHR15892:SF2">
    <property type="entry name" value="LARGE RIBOSOMAL SUBUNIT PROTEIN UL30M"/>
    <property type="match status" value="1"/>
</dbReference>
<dbReference type="PANTHER" id="PTHR15892">
    <property type="entry name" value="MITOCHONDRIAL RIBOSOMAL PROTEIN L30"/>
    <property type="match status" value="1"/>
</dbReference>
<dbReference type="Pfam" id="PF00327">
    <property type="entry name" value="Ribosomal_L30"/>
    <property type="match status" value="1"/>
</dbReference>
<dbReference type="PIRSF" id="PIRSF002211">
    <property type="entry name" value="Ribosomal_L30_bac-type"/>
    <property type="match status" value="1"/>
</dbReference>
<dbReference type="SUPFAM" id="SSF55129">
    <property type="entry name" value="Ribosomal protein L30p/L7e"/>
    <property type="match status" value="1"/>
</dbReference>
<dbReference type="PROSITE" id="PS00634">
    <property type="entry name" value="RIBOSOMAL_L30"/>
    <property type="match status" value="1"/>
</dbReference>
<keyword id="KW-1185">Reference proteome</keyword>
<keyword id="KW-0687">Ribonucleoprotein</keyword>
<keyword id="KW-0689">Ribosomal protein</keyword>
<protein>
    <recommendedName>
        <fullName evidence="1">Large ribosomal subunit protein uL30</fullName>
    </recommendedName>
    <alternativeName>
        <fullName evidence="2">50S ribosomal protein L30</fullName>
    </alternativeName>
</protein>
<accession>A7MPG8</accession>
<sequence length="59" mass="6514">MAKTIKITQTRSAIGRLPKHKATLLGLGLRRIGHTVEREDTPAVRGMVNAVSFMVKVEE</sequence>
<name>RL30_CROS8</name>
<comment type="subunit">
    <text evidence="1">Part of the 50S ribosomal subunit.</text>
</comment>
<comment type="similarity">
    <text evidence="1">Belongs to the universal ribosomal protein uL30 family.</text>
</comment>
<feature type="chain" id="PRO_1000056038" description="Large ribosomal subunit protein uL30">
    <location>
        <begin position="1"/>
        <end position="59"/>
    </location>
</feature>
<proteinExistence type="inferred from homology"/>
<organism>
    <name type="scientific">Cronobacter sakazakii (strain ATCC BAA-894)</name>
    <name type="common">Enterobacter sakazakii</name>
    <dbReference type="NCBI Taxonomy" id="290339"/>
    <lineage>
        <taxon>Bacteria</taxon>
        <taxon>Pseudomonadati</taxon>
        <taxon>Pseudomonadota</taxon>
        <taxon>Gammaproteobacteria</taxon>
        <taxon>Enterobacterales</taxon>
        <taxon>Enterobacteriaceae</taxon>
        <taxon>Cronobacter</taxon>
    </lineage>
</organism>
<reference key="1">
    <citation type="journal article" date="2010" name="PLoS ONE">
        <title>Genome sequence of Cronobacter sakazakii BAA-894 and comparative genomic hybridization analysis with other Cronobacter species.</title>
        <authorList>
            <person name="Kucerova E."/>
            <person name="Clifton S.W."/>
            <person name="Xia X.Q."/>
            <person name="Long F."/>
            <person name="Porwollik S."/>
            <person name="Fulton L."/>
            <person name="Fronick C."/>
            <person name="Minx P."/>
            <person name="Kyung K."/>
            <person name="Warren W."/>
            <person name="Fulton R."/>
            <person name="Feng D."/>
            <person name="Wollam A."/>
            <person name="Shah N."/>
            <person name="Bhonagiri V."/>
            <person name="Nash W.E."/>
            <person name="Hallsworth-Pepin K."/>
            <person name="Wilson R.K."/>
            <person name="McClelland M."/>
            <person name="Forsythe S.J."/>
        </authorList>
    </citation>
    <scope>NUCLEOTIDE SEQUENCE [LARGE SCALE GENOMIC DNA]</scope>
    <source>
        <strain>ATCC BAA-894</strain>
    </source>
</reference>
<evidence type="ECO:0000255" key="1">
    <source>
        <dbReference type="HAMAP-Rule" id="MF_01371"/>
    </source>
</evidence>
<evidence type="ECO:0000305" key="2"/>
<gene>
    <name evidence="1" type="primary">rpmD</name>
    <name type="ordered locus">ESA_00025</name>
</gene>